<keyword id="KW-0285">Flavoprotein</keyword>
<keyword id="KW-0288">FMN</keyword>
<keyword id="KW-0520">NAD</keyword>
<keyword id="KW-0560">Oxidoreductase</keyword>
<reference key="1">
    <citation type="journal article" date="2005" name="Proc. Natl. Acad. Sci. U.S.A.">
        <title>Comparison of the complete genome sequences of Pseudomonas syringae pv. syringae B728a and pv. tomato DC3000.</title>
        <authorList>
            <person name="Feil H."/>
            <person name="Feil W.S."/>
            <person name="Chain P."/>
            <person name="Larimer F."/>
            <person name="Dibartolo G."/>
            <person name="Copeland A."/>
            <person name="Lykidis A."/>
            <person name="Trong S."/>
            <person name="Nolan M."/>
            <person name="Goltsman E."/>
            <person name="Thiel J."/>
            <person name="Malfatti S."/>
            <person name="Loper J.E."/>
            <person name="Lapidus A."/>
            <person name="Detter J.C."/>
            <person name="Land M."/>
            <person name="Richardson P.M."/>
            <person name="Kyrpides N.C."/>
            <person name="Ivanova N."/>
            <person name="Lindow S.E."/>
        </authorList>
    </citation>
    <scope>NUCLEOTIDE SEQUENCE [LARGE SCALE GENOMIC DNA]</scope>
    <source>
        <strain>B728a</strain>
    </source>
</reference>
<name>RUTF_PSEU2</name>
<feature type="chain" id="PRO_0000403041" description="FMN reductase (NADH) RutF">
    <location>
        <begin position="1"/>
        <end position="178"/>
    </location>
</feature>
<proteinExistence type="inferred from homology"/>
<accession>Q4ZXS1</accession>
<dbReference type="EC" id="1.5.1.42" evidence="1"/>
<dbReference type="EMBL" id="CP000075">
    <property type="protein sequence ID" value="AAY36051.1"/>
    <property type="molecule type" value="Genomic_DNA"/>
</dbReference>
<dbReference type="RefSeq" id="WP_011266758.1">
    <property type="nucleotide sequence ID" value="NC_007005.1"/>
</dbReference>
<dbReference type="RefSeq" id="YP_234089.1">
    <property type="nucleotide sequence ID" value="NC_007005.1"/>
</dbReference>
<dbReference type="SMR" id="Q4ZXS1"/>
<dbReference type="STRING" id="205918.Psyr_0995"/>
<dbReference type="KEGG" id="psb:Psyr_0995"/>
<dbReference type="PATRIC" id="fig|205918.7.peg.1024"/>
<dbReference type="eggNOG" id="COG1853">
    <property type="taxonomic scope" value="Bacteria"/>
</dbReference>
<dbReference type="HOGENOM" id="CLU_059021_2_2_6"/>
<dbReference type="OrthoDB" id="6401628at2"/>
<dbReference type="Proteomes" id="UP000000426">
    <property type="component" value="Chromosome"/>
</dbReference>
<dbReference type="GO" id="GO:0010181">
    <property type="term" value="F:FMN binding"/>
    <property type="evidence" value="ECO:0007669"/>
    <property type="project" value="InterPro"/>
</dbReference>
<dbReference type="GO" id="GO:0052874">
    <property type="term" value="F:FMN reductase (NADH) activity"/>
    <property type="evidence" value="ECO:0007669"/>
    <property type="project" value="UniProtKB-EC"/>
</dbReference>
<dbReference type="GO" id="GO:0008752">
    <property type="term" value="F:FMN reductase [NAD(P)H] activity"/>
    <property type="evidence" value="ECO:0007669"/>
    <property type="project" value="InterPro"/>
</dbReference>
<dbReference type="GO" id="GO:0042602">
    <property type="term" value="F:riboflavin reductase (NADPH) activity"/>
    <property type="evidence" value="ECO:0007669"/>
    <property type="project" value="UniProtKB-UniRule"/>
</dbReference>
<dbReference type="GO" id="GO:0019740">
    <property type="term" value="P:nitrogen utilization"/>
    <property type="evidence" value="ECO:0007669"/>
    <property type="project" value="UniProtKB-UniRule"/>
</dbReference>
<dbReference type="GO" id="GO:0006212">
    <property type="term" value="P:uracil catabolic process"/>
    <property type="evidence" value="ECO:0007669"/>
    <property type="project" value="UniProtKB-UniRule"/>
</dbReference>
<dbReference type="Gene3D" id="2.30.110.10">
    <property type="entry name" value="Electron Transport, Fmn-binding Protein, Chain A"/>
    <property type="match status" value="1"/>
</dbReference>
<dbReference type="HAMAP" id="MF_00833">
    <property type="entry name" value="RutF"/>
    <property type="match status" value="1"/>
</dbReference>
<dbReference type="InterPro" id="IPR002563">
    <property type="entry name" value="Flavin_Rdtase-like_dom"/>
</dbReference>
<dbReference type="InterPro" id="IPR050268">
    <property type="entry name" value="NADH-dep_flavin_reductase"/>
</dbReference>
<dbReference type="InterPro" id="IPR019917">
    <property type="entry name" value="RutF"/>
</dbReference>
<dbReference type="InterPro" id="IPR012349">
    <property type="entry name" value="Split_barrel_FMN-bd"/>
</dbReference>
<dbReference type="NCBIfam" id="TIGR03615">
    <property type="entry name" value="RutF"/>
    <property type="match status" value="1"/>
</dbReference>
<dbReference type="PANTHER" id="PTHR30466">
    <property type="entry name" value="FLAVIN REDUCTASE"/>
    <property type="match status" value="1"/>
</dbReference>
<dbReference type="PANTHER" id="PTHR30466:SF1">
    <property type="entry name" value="FMN REDUCTASE (NADH) RUTF"/>
    <property type="match status" value="1"/>
</dbReference>
<dbReference type="Pfam" id="PF01613">
    <property type="entry name" value="Flavin_Reduct"/>
    <property type="match status" value="1"/>
</dbReference>
<dbReference type="SMART" id="SM00903">
    <property type="entry name" value="Flavin_Reduct"/>
    <property type="match status" value="1"/>
</dbReference>
<dbReference type="SUPFAM" id="SSF50475">
    <property type="entry name" value="FMN-binding split barrel"/>
    <property type="match status" value="1"/>
</dbReference>
<evidence type="ECO:0000255" key="1">
    <source>
        <dbReference type="HAMAP-Rule" id="MF_00833"/>
    </source>
</evidence>
<organism>
    <name type="scientific">Pseudomonas syringae pv. syringae (strain B728a)</name>
    <dbReference type="NCBI Taxonomy" id="205918"/>
    <lineage>
        <taxon>Bacteria</taxon>
        <taxon>Pseudomonadati</taxon>
        <taxon>Pseudomonadota</taxon>
        <taxon>Gammaproteobacteria</taxon>
        <taxon>Pseudomonadales</taxon>
        <taxon>Pseudomonadaceae</taxon>
        <taxon>Pseudomonas</taxon>
        <taxon>Pseudomonas syringae</taxon>
    </lineage>
</organism>
<sequence length="178" mass="18439">MPTSSATPAILPIAAVSQLAFRDAMSGLAAAVNLITTDGPGGRAGFTATAVCSVTDQPPTLLVCINRSASVYDAFIENGTLCVNTLGNGQQDLSNLFGGKSSQQERFAGGQWEAGVTGAPVLDSAKLALDCKVSQSVSVGTHDILFCEVVDIRHQSGADALVYFGRRYHHLPSETPAA</sequence>
<protein>
    <recommendedName>
        <fullName evidence="1">FMN reductase (NADH) RutF</fullName>
        <ecNumber evidence="1">1.5.1.42</ecNumber>
    </recommendedName>
    <alternativeName>
        <fullName evidence="1">FMN reductase</fullName>
    </alternativeName>
    <alternativeName>
        <fullName evidence="1">NADH-flavin reductase RutF</fullName>
    </alternativeName>
    <alternativeName>
        <fullName evidence="1">NADH:flavin oxidoreductase</fullName>
    </alternativeName>
</protein>
<comment type="function">
    <text evidence="1">Catalyzes the reduction of FMN to FMNH2 which is used to reduce pyrimidine by RutA via the Rut pathway.</text>
</comment>
<comment type="catalytic activity">
    <reaction evidence="1">
        <text>FMNH2 + NAD(+) = FMN + NADH + 2 H(+)</text>
        <dbReference type="Rhea" id="RHEA:21620"/>
        <dbReference type="ChEBI" id="CHEBI:15378"/>
        <dbReference type="ChEBI" id="CHEBI:57540"/>
        <dbReference type="ChEBI" id="CHEBI:57618"/>
        <dbReference type="ChEBI" id="CHEBI:57945"/>
        <dbReference type="ChEBI" id="CHEBI:58210"/>
        <dbReference type="EC" id="1.5.1.42"/>
    </reaction>
</comment>
<comment type="similarity">
    <text evidence="1">Belongs to the non-flavoprotein flavin reductase family. RutF subfamily.</text>
</comment>
<gene>
    <name evidence="1" type="primary">rutF</name>
    <name type="ordered locus">Psyr_0995</name>
</gene>